<organism>
    <name type="scientific">Enterobacter sp. (strain 638)</name>
    <dbReference type="NCBI Taxonomy" id="399742"/>
    <lineage>
        <taxon>Bacteria</taxon>
        <taxon>Pseudomonadati</taxon>
        <taxon>Pseudomonadota</taxon>
        <taxon>Gammaproteobacteria</taxon>
        <taxon>Enterobacterales</taxon>
        <taxon>Enterobacteriaceae</taxon>
        <taxon>Enterobacter</taxon>
    </lineage>
</organism>
<comment type="function">
    <text evidence="1">Bidirectionally degrades single-stranded DNA into large acid-insoluble oligonucleotides, which are then degraded further into small acid-soluble oligonucleotides.</text>
</comment>
<comment type="catalytic activity">
    <reaction evidence="1">
        <text>Exonucleolytic cleavage in either 5'- to 3'- or 3'- to 5'-direction to yield nucleoside 5'-phosphates.</text>
        <dbReference type="EC" id="3.1.11.6"/>
    </reaction>
</comment>
<comment type="subunit">
    <text evidence="1">Heterooligomer composed of large and small subunits.</text>
</comment>
<comment type="subcellular location">
    <subcellularLocation>
        <location evidence="1">Cytoplasm</location>
    </subcellularLocation>
</comment>
<comment type="similarity">
    <text evidence="1">Belongs to the XseB family.</text>
</comment>
<sequence length="80" mass="8863">MPKKNDAPASFETALNELEQIVNRLESGDLPLEDALNEFERGVQLARQGQVKLQQAEQRVQILLSDSEDAAPTPFTPDAE</sequence>
<keyword id="KW-0963">Cytoplasm</keyword>
<keyword id="KW-0269">Exonuclease</keyword>
<keyword id="KW-0378">Hydrolase</keyword>
<keyword id="KW-0540">Nuclease</keyword>
<accession>A4W793</accession>
<feature type="chain" id="PRO_1000059718" description="Exodeoxyribonuclease 7 small subunit">
    <location>
        <begin position="1"/>
        <end position="80"/>
    </location>
</feature>
<name>EX7S_ENT38</name>
<gene>
    <name evidence="1" type="primary">xseB</name>
    <name type="ordered locus">Ent638_0889</name>
</gene>
<evidence type="ECO:0000255" key="1">
    <source>
        <dbReference type="HAMAP-Rule" id="MF_00337"/>
    </source>
</evidence>
<protein>
    <recommendedName>
        <fullName evidence="1">Exodeoxyribonuclease 7 small subunit</fullName>
        <ecNumber evidence="1">3.1.11.6</ecNumber>
    </recommendedName>
    <alternativeName>
        <fullName evidence="1">Exodeoxyribonuclease VII small subunit</fullName>
        <shortName evidence="1">Exonuclease VII small subunit</shortName>
    </alternativeName>
</protein>
<proteinExistence type="inferred from homology"/>
<reference key="1">
    <citation type="journal article" date="2010" name="PLoS Genet.">
        <title>Genome sequence of the plant growth promoting endophytic bacterium Enterobacter sp. 638.</title>
        <authorList>
            <person name="Taghavi S."/>
            <person name="van der Lelie D."/>
            <person name="Hoffman A."/>
            <person name="Zhang Y.B."/>
            <person name="Walla M.D."/>
            <person name="Vangronsveld J."/>
            <person name="Newman L."/>
            <person name="Monchy S."/>
        </authorList>
    </citation>
    <scope>NUCLEOTIDE SEQUENCE [LARGE SCALE GENOMIC DNA]</scope>
    <source>
        <strain>638</strain>
    </source>
</reference>
<dbReference type="EC" id="3.1.11.6" evidence="1"/>
<dbReference type="EMBL" id="CP000653">
    <property type="protein sequence ID" value="ABP59573.1"/>
    <property type="molecule type" value="Genomic_DNA"/>
</dbReference>
<dbReference type="RefSeq" id="WP_012016294.1">
    <property type="nucleotide sequence ID" value="NC_009436.1"/>
</dbReference>
<dbReference type="SMR" id="A4W793"/>
<dbReference type="STRING" id="399742.Ent638_0889"/>
<dbReference type="GeneID" id="93308016"/>
<dbReference type="KEGG" id="ent:Ent638_0889"/>
<dbReference type="eggNOG" id="COG1722">
    <property type="taxonomic scope" value="Bacteria"/>
</dbReference>
<dbReference type="HOGENOM" id="CLU_145918_3_3_6"/>
<dbReference type="OrthoDB" id="5591562at2"/>
<dbReference type="Proteomes" id="UP000000230">
    <property type="component" value="Chromosome"/>
</dbReference>
<dbReference type="GO" id="GO:0005829">
    <property type="term" value="C:cytosol"/>
    <property type="evidence" value="ECO:0007669"/>
    <property type="project" value="TreeGrafter"/>
</dbReference>
<dbReference type="GO" id="GO:0009318">
    <property type="term" value="C:exodeoxyribonuclease VII complex"/>
    <property type="evidence" value="ECO:0007669"/>
    <property type="project" value="InterPro"/>
</dbReference>
<dbReference type="GO" id="GO:0008855">
    <property type="term" value="F:exodeoxyribonuclease VII activity"/>
    <property type="evidence" value="ECO:0007669"/>
    <property type="project" value="UniProtKB-UniRule"/>
</dbReference>
<dbReference type="GO" id="GO:0006308">
    <property type="term" value="P:DNA catabolic process"/>
    <property type="evidence" value="ECO:0007669"/>
    <property type="project" value="UniProtKB-UniRule"/>
</dbReference>
<dbReference type="FunFam" id="1.10.287.1040:FF:000001">
    <property type="entry name" value="Exodeoxyribonuclease 7 small subunit"/>
    <property type="match status" value="1"/>
</dbReference>
<dbReference type="Gene3D" id="1.10.287.1040">
    <property type="entry name" value="Exonuclease VII, small subunit"/>
    <property type="match status" value="1"/>
</dbReference>
<dbReference type="HAMAP" id="MF_00337">
    <property type="entry name" value="Exonuc_7_S"/>
    <property type="match status" value="1"/>
</dbReference>
<dbReference type="InterPro" id="IPR003761">
    <property type="entry name" value="Exonuc_VII_S"/>
</dbReference>
<dbReference type="InterPro" id="IPR037004">
    <property type="entry name" value="Exonuc_VII_ssu_sf"/>
</dbReference>
<dbReference type="NCBIfam" id="NF002137">
    <property type="entry name" value="PRK00977.1-1"/>
    <property type="match status" value="1"/>
</dbReference>
<dbReference type="NCBIfam" id="NF002140">
    <property type="entry name" value="PRK00977.1-4"/>
    <property type="match status" value="1"/>
</dbReference>
<dbReference type="NCBIfam" id="TIGR01280">
    <property type="entry name" value="xseB"/>
    <property type="match status" value="1"/>
</dbReference>
<dbReference type="PANTHER" id="PTHR34137">
    <property type="entry name" value="EXODEOXYRIBONUCLEASE 7 SMALL SUBUNIT"/>
    <property type="match status" value="1"/>
</dbReference>
<dbReference type="PANTHER" id="PTHR34137:SF1">
    <property type="entry name" value="EXODEOXYRIBONUCLEASE 7 SMALL SUBUNIT"/>
    <property type="match status" value="1"/>
</dbReference>
<dbReference type="Pfam" id="PF02609">
    <property type="entry name" value="Exonuc_VII_S"/>
    <property type="match status" value="1"/>
</dbReference>
<dbReference type="PIRSF" id="PIRSF006488">
    <property type="entry name" value="Exonuc_VII_S"/>
    <property type="match status" value="1"/>
</dbReference>
<dbReference type="SUPFAM" id="SSF116842">
    <property type="entry name" value="XseB-like"/>
    <property type="match status" value="1"/>
</dbReference>